<dbReference type="EC" id="2.8.4.3" evidence="1"/>
<dbReference type="EMBL" id="CP000703">
    <property type="protein sequence ID" value="ABQ49149.1"/>
    <property type="molecule type" value="Genomic_DNA"/>
</dbReference>
<dbReference type="RefSeq" id="WP_001001524.1">
    <property type="nucleotide sequence ID" value="NC_009487.1"/>
</dbReference>
<dbReference type="SMR" id="A5ISH6"/>
<dbReference type="KEGG" id="saj:SaurJH9_1352"/>
<dbReference type="HOGENOM" id="CLU_018697_2_0_9"/>
<dbReference type="GO" id="GO:0005829">
    <property type="term" value="C:cytosol"/>
    <property type="evidence" value="ECO:0007669"/>
    <property type="project" value="TreeGrafter"/>
</dbReference>
<dbReference type="GO" id="GO:0051539">
    <property type="term" value="F:4 iron, 4 sulfur cluster binding"/>
    <property type="evidence" value="ECO:0007669"/>
    <property type="project" value="UniProtKB-UniRule"/>
</dbReference>
<dbReference type="GO" id="GO:0046872">
    <property type="term" value="F:metal ion binding"/>
    <property type="evidence" value="ECO:0007669"/>
    <property type="project" value="UniProtKB-KW"/>
</dbReference>
<dbReference type="GO" id="GO:0035597">
    <property type="term" value="F:N6-isopentenyladenosine methylthiotransferase activity"/>
    <property type="evidence" value="ECO:0007669"/>
    <property type="project" value="TreeGrafter"/>
</dbReference>
<dbReference type="CDD" id="cd01335">
    <property type="entry name" value="Radical_SAM"/>
    <property type="match status" value="1"/>
</dbReference>
<dbReference type="FunFam" id="3.40.50.12160:FF:000006">
    <property type="entry name" value="tRNA-2-methylthio-N(6)-dimethylallyladenosine synthase"/>
    <property type="match status" value="1"/>
</dbReference>
<dbReference type="FunFam" id="3.80.30.20:FF:000001">
    <property type="entry name" value="tRNA-2-methylthio-N(6)-dimethylallyladenosine synthase 2"/>
    <property type="match status" value="1"/>
</dbReference>
<dbReference type="Gene3D" id="3.40.50.12160">
    <property type="entry name" value="Methylthiotransferase, N-terminal domain"/>
    <property type="match status" value="1"/>
</dbReference>
<dbReference type="Gene3D" id="3.80.30.20">
    <property type="entry name" value="tm_1862 like domain"/>
    <property type="match status" value="1"/>
</dbReference>
<dbReference type="HAMAP" id="MF_01864">
    <property type="entry name" value="tRNA_metthiotr_MiaB"/>
    <property type="match status" value="1"/>
</dbReference>
<dbReference type="InterPro" id="IPR006638">
    <property type="entry name" value="Elp3/MiaA/NifB-like_rSAM"/>
</dbReference>
<dbReference type="InterPro" id="IPR005839">
    <property type="entry name" value="Methylthiotransferase"/>
</dbReference>
<dbReference type="InterPro" id="IPR020612">
    <property type="entry name" value="Methylthiotransferase_CS"/>
</dbReference>
<dbReference type="InterPro" id="IPR013848">
    <property type="entry name" value="Methylthiotransferase_N"/>
</dbReference>
<dbReference type="InterPro" id="IPR038135">
    <property type="entry name" value="Methylthiotransferase_N_sf"/>
</dbReference>
<dbReference type="InterPro" id="IPR006463">
    <property type="entry name" value="MiaB_methiolase"/>
</dbReference>
<dbReference type="InterPro" id="IPR007197">
    <property type="entry name" value="rSAM"/>
</dbReference>
<dbReference type="InterPro" id="IPR023404">
    <property type="entry name" value="rSAM_horseshoe"/>
</dbReference>
<dbReference type="InterPro" id="IPR002792">
    <property type="entry name" value="TRAM_dom"/>
</dbReference>
<dbReference type="NCBIfam" id="TIGR01574">
    <property type="entry name" value="miaB-methiolase"/>
    <property type="match status" value="1"/>
</dbReference>
<dbReference type="NCBIfam" id="TIGR00089">
    <property type="entry name" value="MiaB/RimO family radical SAM methylthiotransferase"/>
    <property type="match status" value="1"/>
</dbReference>
<dbReference type="PANTHER" id="PTHR43020">
    <property type="entry name" value="CDK5 REGULATORY SUBUNIT-ASSOCIATED PROTEIN 1"/>
    <property type="match status" value="1"/>
</dbReference>
<dbReference type="PANTHER" id="PTHR43020:SF2">
    <property type="entry name" value="MITOCHONDRIAL TRNA METHYLTHIOTRANSFERASE CDK5RAP1"/>
    <property type="match status" value="1"/>
</dbReference>
<dbReference type="Pfam" id="PF04055">
    <property type="entry name" value="Radical_SAM"/>
    <property type="match status" value="1"/>
</dbReference>
<dbReference type="Pfam" id="PF01938">
    <property type="entry name" value="TRAM"/>
    <property type="match status" value="1"/>
</dbReference>
<dbReference type="Pfam" id="PF00919">
    <property type="entry name" value="UPF0004"/>
    <property type="match status" value="1"/>
</dbReference>
<dbReference type="SFLD" id="SFLDF00273">
    <property type="entry name" value="(dimethylallyl)adenosine_tRNA"/>
    <property type="match status" value="1"/>
</dbReference>
<dbReference type="SFLD" id="SFLDG01082">
    <property type="entry name" value="B12-binding_domain_containing"/>
    <property type="match status" value="1"/>
</dbReference>
<dbReference type="SFLD" id="SFLDS00029">
    <property type="entry name" value="Radical_SAM"/>
    <property type="match status" value="1"/>
</dbReference>
<dbReference type="SMART" id="SM00729">
    <property type="entry name" value="Elp3"/>
    <property type="match status" value="1"/>
</dbReference>
<dbReference type="SUPFAM" id="SSF102114">
    <property type="entry name" value="Radical SAM enzymes"/>
    <property type="match status" value="1"/>
</dbReference>
<dbReference type="PROSITE" id="PS51449">
    <property type="entry name" value="MTTASE_N"/>
    <property type="match status" value="1"/>
</dbReference>
<dbReference type="PROSITE" id="PS01278">
    <property type="entry name" value="MTTASE_RADICAL"/>
    <property type="match status" value="1"/>
</dbReference>
<dbReference type="PROSITE" id="PS51918">
    <property type="entry name" value="RADICAL_SAM"/>
    <property type="match status" value="1"/>
</dbReference>
<dbReference type="PROSITE" id="PS50926">
    <property type="entry name" value="TRAM"/>
    <property type="match status" value="1"/>
</dbReference>
<name>MIAB_STAA9</name>
<feature type="chain" id="PRO_0000374567" description="tRNA-2-methylthio-N(6)-dimethylallyladenosine synthase">
    <location>
        <begin position="1"/>
        <end position="514"/>
    </location>
</feature>
<feature type="domain" description="MTTase N-terminal" evidence="1">
    <location>
        <begin position="68"/>
        <end position="186"/>
    </location>
</feature>
<feature type="domain" description="Radical SAM core" evidence="2">
    <location>
        <begin position="209"/>
        <end position="440"/>
    </location>
</feature>
<feature type="domain" description="TRAM" evidence="1">
    <location>
        <begin position="442"/>
        <end position="505"/>
    </location>
</feature>
<feature type="region of interest" description="Disordered" evidence="3">
    <location>
        <begin position="1"/>
        <end position="21"/>
    </location>
</feature>
<feature type="binding site" evidence="1">
    <location>
        <position position="77"/>
    </location>
    <ligand>
        <name>[4Fe-4S] cluster</name>
        <dbReference type="ChEBI" id="CHEBI:49883"/>
        <label>1</label>
    </ligand>
</feature>
<feature type="binding site" evidence="1">
    <location>
        <position position="113"/>
    </location>
    <ligand>
        <name>[4Fe-4S] cluster</name>
        <dbReference type="ChEBI" id="CHEBI:49883"/>
        <label>1</label>
    </ligand>
</feature>
<feature type="binding site" evidence="1">
    <location>
        <position position="147"/>
    </location>
    <ligand>
        <name>[4Fe-4S] cluster</name>
        <dbReference type="ChEBI" id="CHEBI:49883"/>
        <label>1</label>
    </ligand>
</feature>
<feature type="binding site" evidence="1">
    <location>
        <position position="223"/>
    </location>
    <ligand>
        <name>[4Fe-4S] cluster</name>
        <dbReference type="ChEBI" id="CHEBI:49883"/>
        <label>2</label>
        <note>4Fe-4S-S-AdoMet</note>
    </ligand>
</feature>
<feature type="binding site" evidence="1">
    <location>
        <position position="227"/>
    </location>
    <ligand>
        <name>[4Fe-4S] cluster</name>
        <dbReference type="ChEBI" id="CHEBI:49883"/>
        <label>2</label>
        <note>4Fe-4S-S-AdoMet</note>
    </ligand>
</feature>
<feature type="binding site" evidence="1">
    <location>
        <position position="230"/>
    </location>
    <ligand>
        <name>[4Fe-4S] cluster</name>
        <dbReference type="ChEBI" id="CHEBI:49883"/>
        <label>2</label>
        <note>4Fe-4S-S-AdoMet</note>
    </ligand>
</feature>
<evidence type="ECO:0000255" key="1">
    <source>
        <dbReference type="HAMAP-Rule" id="MF_01864"/>
    </source>
</evidence>
<evidence type="ECO:0000255" key="2">
    <source>
        <dbReference type="PROSITE-ProRule" id="PRU01266"/>
    </source>
</evidence>
<evidence type="ECO:0000256" key="3">
    <source>
        <dbReference type="SAM" id="MobiDB-lite"/>
    </source>
</evidence>
<sequence length="514" mass="58917">MNEEQRKASSVDVLAERDKKAEKDYSKYFEHVYQPPNLKEAKKRGKQEVRYNRDFQIDEKYRGMGNERTFLIKTYGCQMNAHDTEVIAGILEALGYQATTDINTADVILINTCAIRENAENKVFSEIGNLKHLKKERPDILIGVCGCMSQEESVVNKILKSYQNVDMIFGTHNIHHLPEILEEAYLSKAMVVEVWSKEGDVIENLPKVREGNIKAWVNIMYGCDKFCTYCIVPFTRGKERSRRPEDIIDEVRELAREGYKEITLLGQNVNSYGKDLQDIEYDLGDLLQAISKIAIPRVRFTTSHPWDFTDHMIDVISEGGNIVPHIHLPVQSGNNAVLKIMGRKYTRESYLDLVKRIKDRIPNVALTTDIIVGYPNESEEQFEETLTLYDEVGFEHAYTYLYSQRDGTPAAKMKDNVPLNVKKERLQRLNKKVGHYSQIAMSKYEGQTVTVLCEGSSKKDDQVLAGYTDKNKLVNFKAPKEMIGKLVEVRIDEAKQYSLNGSFVKEVEPEMVIQ</sequence>
<keyword id="KW-0004">4Fe-4S</keyword>
<keyword id="KW-0963">Cytoplasm</keyword>
<keyword id="KW-0408">Iron</keyword>
<keyword id="KW-0411">Iron-sulfur</keyword>
<keyword id="KW-0479">Metal-binding</keyword>
<keyword id="KW-0949">S-adenosyl-L-methionine</keyword>
<keyword id="KW-0808">Transferase</keyword>
<keyword id="KW-0819">tRNA processing</keyword>
<protein>
    <recommendedName>
        <fullName evidence="1">tRNA-2-methylthio-N(6)-dimethylallyladenosine synthase</fullName>
        <ecNumber evidence="1">2.8.4.3</ecNumber>
    </recommendedName>
    <alternativeName>
        <fullName evidence="1">(Dimethylallyl)adenosine tRNA methylthiotransferase MiaB</fullName>
    </alternativeName>
    <alternativeName>
        <fullName evidence="1">tRNA-i(6)A37 methylthiotransferase</fullName>
    </alternativeName>
</protein>
<accession>A5ISH6</accession>
<proteinExistence type="inferred from homology"/>
<comment type="function">
    <text evidence="1">Catalyzes the methylthiolation of N6-(dimethylallyl)adenosine (i(6)A), leading to the formation of 2-methylthio-N6-(dimethylallyl)adenosine (ms(2)i(6)A) at position 37 in tRNAs that read codons beginning with uridine.</text>
</comment>
<comment type="catalytic activity">
    <reaction evidence="1">
        <text>N(6)-dimethylallyladenosine(37) in tRNA + (sulfur carrier)-SH + AH2 + 2 S-adenosyl-L-methionine = 2-methylsulfanyl-N(6)-dimethylallyladenosine(37) in tRNA + (sulfur carrier)-H + 5'-deoxyadenosine + L-methionine + A + S-adenosyl-L-homocysteine + 2 H(+)</text>
        <dbReference type="Rhea" id="RHEA:37067"/>
        <dbReference type="Rhea" id="RHEA-COMP:10375"/>
        <dbReference type="Rhea" id="RHEA-COMP:10376"/>
        <dbReference type="Rhea" id="RHEA-COMP:14737"/>
        <dbReference type="Rhea" id="RHEA-COMP:14739"/>
        <dbReference type="ChEBI" id="CHEBI:13193"/>
        <dbReference type="ChEBI" id="CHEBI:15378"/>
        <dbReference type="ChEBI" id="CHEBI:17319"/>
        <dbReference type="ChEBI" id="CHEBI:17499"/>
        <dbReference type="ChEBI" id="CHEBI:29917"/>
        <dbReference type="ChEBI" id="CHEBI:57844"/>
        <dbReference type="ChEBI" id="CHEBI:57856"/>
        <dbReference type="ChEBI" id="CHEBI:59789"/>
        <dbReference type="ChEBI" id="CHEBI:64428"/>
        <dbReference type="ChEBI" id="CHEBI:74415"/>
        <dbReference type="ChEBI" id="CHEBI:74417"/>
        <dbReference type="EC" id="2.8.4.3"/>
    </reaction>
</comment>
<comment type="cofactor">
    <cofactor evidence="1">
        <name>[4Fe-4S] cluster</name>
        <dbReference type="ChEBI" id="CHEBI:49883"/>
    </cofactor>
    <text evidence="1">Binds 2 [4Fe-4S] clusters. One cluster is coordinated with 3 cysteines and an exchangeable S-adenosyl-L-methionine.</text>
</comment>
<comment type="subunit">
    <text evidence="1">Monomer.</text>
</comment>
<comment type="subcellular location">
    <subcellularLocation>
        <location evidence="1">Cytoplasm</location>
    </subcellularLocation>
</comment>
<comment type="similarity">
    <text evidence="1">Belongs to the methylthiotransferase family. MiaB subfamily.</text>
</comment>
<gene>
    <name evidence="1" type="primary">miaB</name>
    <name type="ordered locus">SaurJH9_1352</name>
</gene>
<organism>
    <name type="scientific">Staphylococcus aureus (strain JH9)</name>
    <dbReference type="NCBI Taxonomy" id="359786"/>
    <lineage>
        <taxon>Bacteria</taxon>
        <taxon>Bacillati</taxon>
        <taxon>Bacillota</taxon>
        <taxon>Bacilli</taxon>
        <taxon>Bacillales</taxon>
        <taxon>Staphylococcaceae</taxon>
        <taxon>Staphylococcus</taxon>
    </lineage>
</organism>
<reference key="1">
    <citation type="submission" date="2007-05" db="EMBL/GenBank/DDBJ databases">
        <title>Complete sequence of chromosome of Staphylococcus aureus subsp. aureus JH9.</title>
        <authorList>
            <consortium name="US DOE Joint Genome Institute"/>
            <person name="Copeland A."/>
            <person name="Lucas S."/>
            <person name="Lapidus A."/>
            <person name="Barry K."/>
            <person name="Detter J.C."/>
            <person name="Glavina del Rio T."/>
            <person name="Hammon N."/>
            <person name="Israni S."/>
            <person name="Pitluck S."/>
            <person name="Chain P."/>
            <person name="Malfatti S."/>
            <person name="Shin M."/>
            <person name="Vergez L."/>
            <person name="Schmutz J."/>
            <person name="Larimer F."/>
            <person name="Land M."/>
            <person name="Hauser L."/>
            <person name="Kyrpides N."/>
            <person name="Kim E."/>
            <person name="Tomasz A."/>
            <person name="Richardson P."/>
        </authorList>
    </citation>
    <scope>NUCLEOTIDE SEQUENCE [LARGE SCALE GENOMIC DNA]</scope>
    <source>
        <strain>JH9</strain>
    </source>
</reference>